<gene>
    <name type="primary">frdA</name>
    <name type="ordered locus">HP_0192</name>
</gene>
<evidence type="ECO:0000250" key="1">
    <source>
        <dbReference type="UniProtKB" id="P00363"/>
    </source>
</evidence>
<evidence type="ECO:0000250" key="2">
    <source>
        <dbReference type="UniProtKB" id="P17412"/>
    </source>
</evidence>
<evidence type="ECO:0000305" key="3"/>
<dbReference type="EC" id="1.3.5.1" evidence="2"/>
<dbReference type="EMBL" id="U78101">
    <property type="protein sequence ID" value="AAC46064.1"/>
    <property type="molecule type" value="Genomic_DNA"/>
</dbReference>
<dbReference type="EMBL" id="AE000511">
    <property type="protein sequence ID" value="AAD07259.1"/>
    <property type="molecule type" value="Genomic_DNA"/>
</dbReference>
<dbReference type="PIR" id="H64543">
    <property type="entry name" value="H64543"/>
</dbReference>
<dbReference type="RefSeq" id="NP_206991.1">
    <property type="nucleotide sequence ID" value="NC_000915.1"/>
</dbReference>
<dbReference type="RefSeq" id="WP_000706021.1">
    <property type="nucleotide sequence ID" value="NC_018939.1"/>
</dbReference>
<dbReference type="SMR" id="O06913"/>
<dbReference type="DIP" id="DIP-3345N"/>
<dbReference type="FunCoup" id="O06913">
    <property type="interactions" value="333"/>
</dbReference>
<dbReference type="IntAct" id="O06913">
    <property type="interactions" value="2"/>
</dbReference>
<dbReference type="MINT" id="O06913"/>
<dbReference type="STRING" id="85962.HP_0192"/>
<dbReference type="PaxDb" id="85962-C694_00955"/>
<dbReference type="EnsemblBacteria" id="AAD07259">
    <property type="protein sequence ID" value="AAD07259"/>
    <property type="gene ID" value="HP_0192"/>
</dbReference>
<dbReference type="KEGG" id="heo:C694_00955"/>
<dbReference type="KEGG" id="hpy:HP_0192"/>
<dbReference type="PATRIC" id="fig|85962.47.peg.207"/>
<dbReference type="eggNOG" id="COG1053">
    <property type="taxonomic scope" value="Bacteria"/>
</dbReference>
<dbReference type="InParanoid" id="O06913"/>
<dbReference type="OrthoDB" id="9806724at2"/>
<dbReference type="PhylomeDB" id="O06913"/>
<dbReference type="BioCyc" id="MetaCyc:HP0192-MONOMER"/>
<dbReference type="SABIO-RK" id="O06913"/>
<dbReference type="Proteomes" id="UP000000429">
    <property type="component" value="Chromosome"/>
</dbReference>
<dbReference type="GO" id="GO:0005886">
    <property type="term" value="C:plasma membrane"/>
    <property type="evidence" value="ECO:0000318"/>
    <property type="project" value="GO_Central"/>
</dbReference>
<dbReference type="GO" id="GO:0009055">
    <property type="term" value="F:electron transfer activity"/>
    <property type="evidence" value="ECO:0000318"/>
    <property type="project" value="GO_Central"/>
</dbReference>
<dbReference type="GO" id="GO:0050660">
    <property type="term" value="F:flavin adenine dinucleotide binding"/>
    <property type="evidence" value="ECO:0000318"/>
    <property type="project" value="GO_Central"/>
</dbReference>
<dbReference type="GO" id="GO:0008177">
    <property type="term" value="F:succinate dehydrogenase (quinone) activity"/>
    <property type="evidence" value="ECO:0007669"/>
    <property type="project" value="RHEA"/>
</dbReference>
<dbReference type="GO" id="GO:0000104">
    <property type="term" value="F:succinate dehydrogenase activity"/>
    <property type="evidence" value="ECO:0000318"/>
    <property type="project" value="GO_Central"/>
</dbReference>
<dbReference type="GO" id="GO:0009061">
    <property type="term" value="P:anaerobic respiration"/>
    <property type="evidence" value="ECO:0000318"/>
    <property type="project" value="GO_Central"/>
</dbReference>
<dbReference type="FunFam" id="3.10.20.820:FF:000002">
    <property type="entry name" value="Fumarate reductase flavoprotein subunit"/>
    <property type="match status" value="1"/>
</dbReference>
<dbReference type="FunFam" id="3.50.50.60:FF:000009">
    <property type="entry name" value="Succinate dehydrogenase flavoprotein subunit"/>
    <property type="match status" value="1"/>
</dbReference>
<dbReference type="FunFam" id="3.90.700.10:FF:000005">
    <property type="entry name" value="Succinate dehydrogenase flavoprotein subunit"/>
    <property type="match status" value="1"/>
</dbReference>
<dbReference type="Gene3D" id="3.10.20.820">
    <property type="match status" value="1"/>
</dbReference>
<dbReference type="Gene3D" id="3.50.50.60">
    <property type="entry name" value="FAD/NAD(P)-binding domain"/>
    <property type="match status" value="2"/>
</dbReference>
<dbReference type="Gene3D" id="1.20.58.100">
    <property type="entry name" value="Fumarate reductase/succinate dehydrogenase flavoprotein-like, C-terminal domain"/>
    <property type="match status" value="1"/>
</dbReference>
<dbReference type="Gene3D" id="3.90.700.10">
    <property type="entry name" value="Succinate dehydrogenase/fumarate reductase flavoprotein, catalytic domain"/>
    <property type="match status" value="1"/>
</dbReference>
<dbReference type="InterPro" id="IPR003953">
    <property type="entry name" value="FAD-dep_OxRdtase_2_FAD-bd"/>
</dbReference>
<dbReference type="InterPro" id="IPR036188">
    <property type="entry name" value="FAD/NAD-bd_sf"/>
</dbReference>
<dbReference type="InterPro" id="IPR003952">
    <property type="entry name" value="FRD_SDH_FAD_BS"/>
</dbReference>
<dbReference type="InterPro" id="IPR037099">
    <property type="entry name" value="Fum_R/Succ_DH_flav-like_C_sf"/>
</dbReference>
<dbReference type="InterPro" id="IPR015939">
    <property type="entry name" value="Fum_Rdtase/Succ_DH_flav-like_C"/>
</dbReference>
<dbReference type="InterPro" id="IPR030664">
    <property type="entry name" value="SdhA/FrdA/AprA"/>
</dbReference>
<dbReference type="InterPro" id="IPR027477">
    <property type="entry name" value="Succ_DH/fumarate_Rdtase_cat_sf"/>
</dbReference>
<dbReference type="NCBIfam" id="NF006383">
    <property type="entry name" value="PRK08626.1"/>
    <property type="match status" value="1"/>
</dbReference>
<dbReference type="PANTHER" id="PTHR11632:SF71">
    <property type="entry name" value="FUMARATE REDUCTASE FLAVOPROTEIN SUBUNIT"/>
    <property type="match status" value="1"/>
</dbReference>
<dbReference type="PANTHER" id="PTHR11632">
    <property type="entry name" value="SUCCINATE DEHYDROGENASE 2 FLAVOPROTEIN SUBUNIT"/>
    <property type="match status" value="1"/>
</dbReference>
<dbReference type="Pfam" id="PF00890">
    <property type="entry name" value="FAD_binding_2"/>
    <property type="match status" value="1"/>
</dbReference>
<dbReference type="Pfam" id="PF02910">
    <property type="entry name" value="Succ_DH_flav_C"/>
    <property type="match status" value="1"/>
</dbReference>
<dbReference type="PIRSF" id="PIRSF000171">
    <property type="entry name" value="SDHA_APRA_LASPO"/>
    <property type="match status" value="1"/>
</dbReference>
<dbReference type="PRINTS" id="PR00368">
    <property type="entry name" value="FADPNR"/>
</dbReference>
<dbReference type="SUPFAM" id="SSF51905">
    <property type="entry name" value="FAD/NAD(P)-binding domain"/>
    <property type="match status" value="1"/>
</dbReference>
<dbReference type="SUPFAM" id="SSF46977">
    <property type="entry name" value="Succinate dehydrogenase/fumarate reductase flavoprotein C-terminal domain"/>
    <property type="match status" value="1"/>
</dbReference>
<dbReference type="SUPFAM" id="SSF56425">
    <property type="entry name" value="Succinate dehydrogenase/fumarate reductase flavoprotein, catalytic domain"/>
    <property type="match status" value="1"/>
</dbReference>
<dbReference type="PROSITE" id="PS00504">
    <property type="entry name" value="FRD_SDH_FAD_BINDING"/>
    <property type="match status" value="1"/>
</dbReference>
<keyword id="KW-0997">Cell inner membrane</keyword>
<keyword id="KW-1003">Cell membrane</keyword>
<keyword id="KW-0249">Electron transport</keyword>
<keyword id="KW-0274">FAD</keyword>
<keyword id="KW-0285">Flavoprotein</keyword>
<keyword id="KW-0472">Membrane</keyword>
<keyword id="KW-0560">Oxidoreductase</keyword>
<keyword id="KW-1185">Reference proteome</keyword>
<keyword id="KW-0813">Transport</keyword>
<comment type="function">
    <text evidence="2">The fumarate reductase enzyme complex is required for fumarate respiration.</text>
</comment>
<comment type="catalytic activity">
    <reaction evidence="2">
        <text>a quinone + succinate = fumarate + a quinol</text>
        <dbReference type="Rhea" id="RHEA:40523"/>
        <dbReference type="ChEBI" id="CHEBI:24646"/>
        <dbReference type="ChEBI" id="CHEBI:29806"/>
        <dbReference type="ChEBI" id="CHEBI:30031"/>
        <dbReference type="ChEBI" id="CHEBI:132124"/>
        <dbReference type="EC" id="1.3.5.1"/>
    </reaction>
</comment>
<comment type="cofactor">
    <cofactor evidence="2">
        <name>FAD</name>
        <dbReference type="ChEBI" id="CHEBI:57692"/>
    </cofactor>
    <text evidence="2">Binds 1 FAD covalently per subunit.</text>
</comment>
<comment type="subunit">
    <text evidence="2">Part of an enzyme complex containing three subunits: a flavoprotein (frdA), an iron-sulfur protein (frdB), and diheme cytochrome b (frdC).</text>
</comment>
<comment type="subcellular location">
    <subcellularLocation>
        <location evidence="2">Cell inner membrane</location>
        <topology evidence="2">Peripheral membrane protein</topology>
        <orientation evidence="2">Cytoplasmic side</orientation>
    </subcellularLocation>
</comment>
<comment type="similarity">
    <text evidence="3">Belongs to the FAD-dependent oxidoreductase 2 family. FRD/SDH subfamily.</text>
</comment>
<accession>O06913</accession>
<sequence>MKITYCDALIIGGGLAGLRASIACKQKGLNTIVLSLVPVRRSHSAAAQGGMQASLANAKKSEGDNEDLHFLDTVKGSDWGCDQQVARMFVTTAPKAIRELASWGVPWTRIKKGDRPAVVNGEHVTITERDDRHGYILSRDFGGTKKWRTCFTADATGHTMLYAVANEALHHKVDIQDRKDMLAFIHHDNKCYGAVVRDLITGEISAYVSKGTLLATGGYGRVYKHTTNAVICDGAGAASALETGVAKLGNMEAVQFHPTALVPSGILMTEGCRGDGGVLRDKFGRRFMPAYEPEKKELASRDVVSRRILEHIQKGYGAKSPYGDHVWLDIAILGRNHVEKNLRDVRDIAMTFAGIDPADSKEQTKDNMQGVPANEPEYGQAMAKQKGWIPIKPMQHYSMGGVRTNPKGETHLKGLFCAGEAACWDLHGFNRLGGNSVSEAVVAGMIIGDYFASHCLEAQIEINTQKVEAFIKESQDYMHFLLHNEGKEDVYEIRERMKEVMDEKVGVFREGKRLEEALKELQELYARSKNICVKNKVLHNNPELEDAYRTKKMLKLALCITQGALLRTESRGAHTRIDYPKRDDEKWLNRTLASWPSAEQDMPTIEYEELDVMKMEISPDFRGYGKKGNFIPHPKKEERDAEILKTILELEKLGKDRIEVQHALMPFELQEKYKARNMRLEDEEVRARGEHLYSFNVHELLDQHNANLKGEHHE</sequence>
<organism>
    <name type="scientific">Helicobacter pylori (strain ATCC 700392 / 26695)</name>
    <name type="common">Campylobacter pylori</name>
    <dbReference type="NCBI Taxonomy" id="85962"/>
    <lineage>
        <taxon>Bacteria</taxon>
        <taxon>Pseudomonadati</taxon>
        <taxon>Campylobacterota</taxon>
        <taxon>Epsilonproteobacteria</taxon>
        <taxon>Campylobacterales</taxon>
        <taxon>Helicobacteraceae</taxon>
        <taxon>Helicobacter</taxon>
    </lineage>
</organism>
<protein>
    <recommendedName>
        <fullName>Fumarate reductase flavoprotein subunit</fullName>
        <ecNumber evidence="2">1.3.5.1</ecNumber>
    </recommendedName>
    <alternativeName>
        <fullName evidence="3">Quinol-fumarate reductase flavoprotein subunit</fullName>
        <shortName evidence="3">QFR flavoprotein subunit</shortName>
    </alternativeName>
</protein>
<proteinExistence type="inferred from homology"/>
<feature type="chain" id="PRO_0000158662" description="Fumarate reductase flavoprotein subunit">
    <location>
        <begin position="1"/>
        <end position="714"/>
    </location>
</feature>
<feature type="active site" evidence="1">
    <location>
        <position position="257"/>
    </location>
</feature>
<feature type="active site" evidence="1">
    <location>
        <position position="273"/>
    </location>
</feature>
<feature type="binding site" evidence="2">
    <location>
        <begin position="13"/>
        <end position="16"/>
    </location>
    <ligand>
        <name>FAD</name>
        <dbReference type="ChEBI" id="CHEBI:57692"/>
    </ligand>
</feature>
<feature type="binding site" evidence="2">
    <location>
        <begin position="42"/>
        <end position="44"/>
    </location>
    <ligand>
        <name>FAD</name>
        <dbReference type="ChEBI" id="CHEBI:57692"/>
    </ligand>
</feature>
<feature type="binding site" evidence="2">
    <location>
        <begin position="49"/>
        <end position="50"/>
    </location>
    <ligand>
        <name>FAD</name>
        <dbReference type="ChEBI" id="CHEBI:57692"/>
    </ligand>
</feature>
<feature type="binding site" evidence="2">
    <location>
        <position position="420"/>
    </location>
    <ligand>
        <name>FAD</name>
        <dbReference type="ChEBI" id="CHEBI:57692"/>
    </ligand>
</feature>
<feature type="binding site" evidence="2">
    <location>
        <begin position="436"/>
        <end position="437"/>
    </location>
    <ligand>
        <name>FAD</name>
        <dbReference type="ChEBI" id="CHEBI:57692"/>
    </ligand>
</feature>
<feature type="modified residue" description="Tele-8alpha-FAD histidine" evidence="2">
    <location>
        <position position="43"/>
    </location>
</feature>
<feature type="sequence conflict" description="In Ref. 1; AAC46064." evidence="3" ref="1">
    <original>K</original>
    <variation>R</variation>
    <location>
        <position position="112"/>
    </location>
</feature>
<feature type="sequence conflict" description="In Ref. 1; AAC46064." evidence="3" ref="1">
    <original>HHKVDI</original>
    <variation>NTTKWIL</variation>
    <location>
        <begin position="170"/>
        <end position="175"/>
    </location>
</feature>
<feature type="sequence conflict" description="In Ref. 1; AAC46064." evidence="3" ref="1">
    <original>K</original>
    <variation>E</variation>
    <location>
        <position position="361"/>
    </location>
</feature>
<feature type="sequence conflict" description="In Ref. 1; AAC46064." evidence="3" ref="1">
    <original>VPA</original>
    <variation>MPT</variation>
    <location>
        <begin position="371"/>
        <end position="373"/>
    </location>
</feature>
<feature type="sequence conflict" description="In Ref. 1; AAC46064." evidence="3" ref="1">
    <original>R</original>
    <variation>K</variation>
    <location>
        <position position="513"/>
    </location>
</feature>
<feature type="sequence conflict" description="In Ref. 1; AAC46064." evidence="3" ref="1">
    <original>MEISPDFRGY</original>
    <variation>WKSALILGAM</variation>
    <location>
        <begin position="615"/>
        <end position="624"/>
    </location>
</feature>
<feature type="sequence conflict" description="In Ref. 1; AAC46064." evidence="3" ref="1">
    <original>I</original>
    <variation>V</variation>
    <location>
        <position position="658"/>
    </location>
</feature>
<feature type="sequence conflict" description="In Ref. 1; AAC46064." evidence="3" ref="1">
    <original>E</original>
    <variation>D</variation>
    <location>
        <position position="699"/>
    </location>
</feature>
<feature type="sequence conflict" description="In Ref. 1; AAC46064." evidence="3" ref="1">
    <original>Q</original>
    <variation>K</variation>
    <location>
        <position position="703"/>
    </location>
</feature>
<reference key="1">
    <citation type="journal article" date="1997" name="Gene">
        <title>Cloning and functional characterization of Helicobacter pylori fumarate reductase operon comprising three structural genes coding for subunits C, A and B.</title>
        <authorList>
            <person name="Ge Z."/>
            <person name="Jiang Q."/>
            <person name="Kalisiak M.S."/>
            <person name="Taylor D.E."/>
        </authorList>
    </citation>
    <scope>NUCLEOTIDE SEQUENCE [GENOMIC DNA]</scope>
    <source>
        <strain>ATCC 43629 / JCM 7656 / NCTC 11639 / UA802</strain>
    </source>
</reference>
<reference key="2">
    <citation type="journal article" date="1997" name="Nature">
        <title>The complete genome sequence of the gastric pathogen Helicobacter pylori.</title>
        <authorList>
            <person name="Tomb J.-F."/>
            <person name="White O."/>
            <person name="Kerlavage A.R."/>
            <person name="Clayton R.A."/>
            <person name="Sutton G.G."/>
            <person name="Fleischmann R.D."/>
            <person name="Ketchum K.A."/>
            <person name="Klenk H.-P."/>
            <person name="Gill S.R."/>
            <person name="Dougherty B.A."/>
            <person name="Nelson K.E."/>
            <person name="Quackenbush J."/>
            <person name="Zhou L."/>
            <person name="Kirkness E.F."/>
            <person name="Peterson S.N."/>
            <person name="Loftus B.J."/>
            <person name="Richardson D.L."/>
            <person name="Dodson R.J."/>
            <person name="Khalak H.G."/>
            <person name="Glodek A."/>
            <person name="McKenney K."/>
            <person name="FitzGerald L.M."/>
            <person name="Lee N."/>
            <person name="Adams M.D."/>
            <person name="Hickey E.K."/>
            <person name="Berg D.E."/>
            <person name="Gocayne J.D."/>
            <person name="Utterback T.R."/>
            <person name="Peterson J.D."/>
            <person name="Kelley J.M."/>
            <person name="Cotton M.D."/>
            <person name="Weidman J.F."/>
            <person name="Fujii C."/>
            <person name="Bowman C."/>
            <person name="Watthey L."/>
            <person name="Wallin E."/>
            <person name="Hayes W.S."/>
            <person name="Borodovsky M."/>
            <person name="Karp P.D."/>
            <person name="Smith H.O."/>
            <person name="Fraser C.M."/>
            <person name="Venter J.C."/>
        </authorList>
    </citation>
    <scope>NUCLEOTIDE SEQUENCE [LARGE SCALE GENOMIC DNA]</scope>
    <source>
        <strain>ATCC 700392 / 26695</strain>
    </source>
</reference>
<name>FRDA_HELPY</name>